<protein>
    <recommendedName>
        <fullName evidence="4">Transcription factor Sox-1</fullName>
    </recommendedName>
    <alternativeName>
        <fullName evidence="8">SRY (Sex determining region Y)-box 1</fullName>
    </alternativeName>
</protein>
<comment type="function">
    <text evidence="3 4">Transcriptional activator. Participates in neural induction (By similarity).</text>
</comment>
<comment type="subcellular location">
    <subcellularLocation>
        <location evidence="2 5">Nucleus</location>
    </subcellularLocation>
</comment>
<comment type="domain">
    <text evidence="1">The 9aaTAD motif is a transactivation domain present in a large number of yeast and animal transcription factors.</text>
</comment>
<sequence>MYSMMMETDLHSPGVQPPSNTGQTGGGGGNKANQDRVKRPMNAFMVWSRGQRRKMAQENPKMHNSEISKRLGAEWKVMSEAEKRPFIDEAKRLRALHMKEHPDYKYRPRRKTKTLLKKDKYSLAGGLLHAAGGGHMGVGLSPGGGGGGTGGVVVQRLESPGSGASAGGYAHMNGWANGAYPGSVAAAAAAAMMQEAQLAYSQQQQQHPGSGGHHPHHHPHHPHHHPHHHPHHNPTPHPPPPPPQPMHRYDMSALQYSPLPGAQTYMTASPSGYGALGYSSSQQQHQGSPSSAAVAAAAAAAAAAAASSGALGALGSLVKSEPSVSPPVSGGGPHNRPPCPGDLREMISMYLPSGGEAGDPAAAAAAAAAAAAAATSRLHSLPQHYQGAGTGVTGTVPLTHI</sequence>
<accession>A2TED3</accession>
<accession>Q0D2F2</accession>
<feature type="chain" id="PRO_0000378064" description="Transcription factor Sox-1">
    <location>
        <begin position="1"/>
        <end position="401"/>
    </location>
</feature>
<feature type="DNA-binding region" description="HMG box" evidence="5">
    <location>
        <begin position="37"/>
        <end position="105"/>
    </location>
</feature>
<feature type="region of interest" description="Disordered" evidence="6">
    <location>
        <begin position="1"/>
        <end position="38"/>
    </location>
</feature>
<feature type="region of interest" description="Disordered" evidence="6">
    <location>
        <begin position="197"/>
        <end position="249"/>
    </location>
</feature>
<feature type="region of interest" description="Disordered" evidence="6">
    <location>
        <begin position="320"/>
        <end position="343"/>
    </location>
</feature>
<feature type="short sequence motif" description="9aaTAD" evidence="1">
    <location>
        <begin position="345"/>
        <end position="353"/>
    </location>
</feature>
<feature type="compositionally biased region" description="Low complexity" evidence="6">
    <location>
        <begin position="197"/>
        <end position="208"/>
    </location>
</feature>
<feature type="compositionally biased region" description="Basic residues" evidence="6">
    <location>
        <begin position="213"/>
        <end position="234"/>
    </location>
</feature>
<feature type="compositionally biased region" description="Pro residues" evidence="6">
    <location>
        <begin position="235"/>
        <end position="245"/>
    </location>
</feature>
<proteinExistence type="evidence at transcript level"/>
<reference evidence="9" key="1">
    <citation type="submission" date="2006-12" db="EMBL/GenBank/DDBJ databases">
        <title>Sox3 acts through multiple regulatory targets to suppress Nodal signaling during Xenopus germ-layer specification.</title>
        <authorList>
            <person name="Zhang C."/>
            <person name="Grammer T.C."/>
            <person name="Basta T."/>
            <person name="Tai P."/>
            <person name="Espinosa J.M."/>
            <person name="Klymkowsky M.W."/>
        </authorList>
    </citation>
    <scope>NUCLEOTIDE SEQUENCE [MRNA]</scope>
</reference>
<reference evidence="9" key="2">
    <citation type="submission" date="2008-02" db="EMBL/GenBank/DDBJ databases">
        <authorList>
            <consortium name="NIH - Xenopus Gene Collection (XGC) project"/>
        </authorList>
    </citation>
    <scope>NUCLEOTIDE SEQUENCE [LARGE SCALE MRNA]</scope>
    <source>
        <tissue evidence="8">Brain</tissue>
    </source>
</reference>
<gene>
    <name evidence="7" type="primary">sox1</name>
</gene>
<organism>
    <name type="scientific">Xenopus tropicalis</name>
    <name type="common">Western clawed frog</name>
    <name type="synonym">Silurana tropicalis</name>
    <dbReference type="NCBI Taxonomy" id="8364"/>
    <lineage>
        <taxon>Eukaryota</taxon>
        <taxon>Metazoa</taxon>
        <taxon>Chordata</taxon>
        <taxon>Craniata</taxon>
        <taxon>Vertebrata</taxon>
        <taxon>Euteleostomi</taxon>
        <taxon>Amphibia</taxon>
        <taxon>Batrachia</taxon>
        <taxon>Anura</taxon>
        <taxon>Pipoidea</taxon>
        <taxon>Pipidae</taxon>
        <taxon>Xenopodinae</taxon>
        <taxon>Xenopus</taxon>
        <taxon>Silurana</taxon>
    </lineage>
</organism>
<dbReference type="EMBL" id="EF192052">
    <property type="protein sequence ID" value="ABM92339.1"/>
    <property type="molecule type" value="mRNA"/>
</dbReference>
<dbReference type="EMBL" id="BC121846">
    <property type="protein sequence ID" value="AAI21847.1"/>
    <property type="molecule type" value="mRNA"/>
</dbReference>
<dbReference type="EMBL" id="BC159121">
    <property type="protein sequence ID" value="AAI59122.1"/>
    <property type="molecule type" value="mRNA"/>
</dbReference>
<dbReference type="RefSeq" id="NP_001074465.1">
    <property type="nucleotide sequence ID" value="NM_001080996.1"/>
</dbReference>
<dbReference type="SMR" id="A2TED3"/>
<dbReference type="FunCoup" id="A2TED3">
    <property type="interactions" value="436"/>
</dbReference>
<dbReference type="GeneID" id="779569"/>
<dbReference type="KEGG" id="xtr:779569"/>
<dbReference type="AGR" id="Xenbase:XB-GENE-1018269"/>
<dbReference type="CTD" id="6656"/>
<dbReference type="Xenbase" id="XB-GENE-1018269">
    <property type="gene designation" value="sox1"/>
</dbReference>
<dbReference type="InParanoid" id="A2TED3"/>
<dbReference type="OMA" id="MMETDMH"/>
<dbReference type="OrthoDB" id="6247875at2759"/>
<dbReference type="Proteomes" id="UP000008143">
    <property type="component" value="Chromosome 2"/>
</dbReference>
<dbReference type="GO" id="GO:0005634">
    <property type="term" value="C:nucleus"/>
    <property type="evidence" value="ECO:0000250"/>
    <property type="project" value="UniProtKB"/>
</dbReference>
<dbReference type="GO" id="GO:0003677">
    <property type="term" value="F:DNA binding"/>
    <property type="evidence" value="ECO:0007669"/>
    <property type="project" value="UniProtKB-KW"/>
</dbReference>
<dbReference type="GO" id="GO:0007399">
    <property type="term" value="P:nervous system development"/>
    <property type="evidence" value="ECO:0000250"/>
    <property type="project" value="UniProtKB"/>
</dbReference>
<dbReference type="GO" id="GO:0006355">
    <property type="term" value="P:regulation of DNA-templated transcription"/>
    <property type="evidence" value="ECO:0007669"/>
    <property type="project" value="InterPro"/>
</dbReference>
<dbReference type="CDD" id="cd01388">
    <property type="entry name" value="HMG-box_SoxB"/>
    <property type="match status" value="1"/>
</dbReference>
<dbReference type="FunFam" id="1.10.30.10:FF:000002">
    <property type="entry name" value="transcription factor Sox-2"/>
    <property type="match status" value="1"/>
</dbReference>
<dbReference type="Gene3D" id="1.10.30.10">
    <property type="entry name" value="High mobility group box domain"/>
    <property type="match status" value="1"/>
</dbReference>
<dbReference type="InterPro" id="IPR009071">
    <property type="entry name" value="HMG_box_dom"/>
</dbReference>
<dbReference type="InterPro" id="IPR036910">
    <property type="entry name" value="HMG_box_dom_sf"/>
</dbReference>
<dbReference type="InterPro" id="IPR022097">
    <property type="entry name" value="SOX_fam"/>
</dbReference>
<dbReference type="InterPro" id="IPR050140">
    <property type="entry name" value="SRY-related_HMG-box_TF-like"/>
</dbReference>
<dbReference type="PANTHER" id="PTHR10270">
    <property type="entry name" value="SOX TRANSCRIPTION FACTOR"/>
    <property type="match status" value="1"/>
</dbReference>
<dbReference type="PANTHER" id="PTHR10270:SF328">
    <property type="entry name" value="TRANSCRIPTION FACTOR SOX-1"/>
    <property type="match status" value="1"/>
</dbReference>
<dbReference type="Pfam" id="PF00505">
    <property type="entry name" value="HMG_box"/>
    <property type="match status" value="1"/>
</dbReference>
<dbReference type="Pfam" id="PF12336">
    <property type="entry name" value="SOXp"/>
    <property type="match status" value="1"/>
</dbReference>
<dbReference type="SMART" id="SM00398">
    <property type="entry name" value="HMG"/>
    <property type="match status" value="1"/>
</dbReference>
<dbReference type="SUPFAM" id="SSF47095">
    <property type="entry name" value="HMG-box"/>
    <property type="match status" value="1"/>
</dbReference>
<dbReference type="PROSITE" id="PS50118">
    <property type="entry name" value="HMG_BOX_2"/>
    <property type="match status" value="1"/>
</dbReference>
<keyword id="KW-0010">Activator</keyword>
<keyword id="KW-0217">Developmental protein</keyword>
<keyword id="KW-0238">DNA-binding</keyword>
<keyword id="KW-0539">Nucleus</keyword>
<keyword id="KW-1185">Reference proteome</keyword>
<keyword id="KW-0804">Transcription</keyword>
<keyword id="KW-0805">Transcription regulation</keyword>
<name>SOX1_XENTR</name>
<evidence type="ECO:0000250" key="1">
    <source>
        <dbReference type="UniProtKB" id="P41225"/>
    </source>
</evidence>
<evidence type="ECO:0000250" key="2">
    <source>
        <dbReference type="UniProtKB" id="P48430"/>
    </source>
</evidence>
<evidence type="ECO:0000250" key="3">
    <source>
        <dbReference type="UniProtKB" id="Q2PG84"/>
    </source>
</evidence>
<evidence type="ECO:0000250" key="4">
    <source>
        <dbReference type="UniProtKB" id="Q6DGL6"/>
    </source>
</evidence>
<evidence type="ECO:0000255" key="5">
    <source>
        <dbReference type="PROSITE-ProRule" id="PRU00267"/>
    </source>
</evidence>
<evidence type="ECO:0000256" key="6">
    <source>
        <dbReference type="SAM" id="MobiDB-lite"/>
    </source>
</evidence>
<evidence type="ECO:0000312" key="7">
    <source>
        <dbReference type="EMBL" id="AAI21847.1"/>
    </source>
</evidence>
<evidence type="ECO:0000312" key="8">
    <source>
        <dbReference type="EMBL" id="AAI59122.1"/>
    </source>
</evidence>
<evidence type="ECO:0000312" key="9">
    <source>
        <dbReference type="EMBL" id="ABM92339.1"/>
    </source>
</evidence>